<organism>
    <name type="scientific">Bos taurus</name>
    <name type="common">Bovine</name>
    <dbReference type="NCBI Taxonomy" id="9913"/>
    <lineage>
        <taxon>Eukaryota</taxon>
        <taxon>Metazoa</taxon>
        <taxon>Chordata</taxon>
        <taxon>Craniata</taxon>
        <taxon>Vertebrata</taxon>
        <taxon>Euteleostomi</taxon>
        <taxon>Mammalia</taxon>
        <taxon>Eutheria</taxon>
        <taxon>Laurasiatheria</taxon>
        <taxon>Artiodactyla</taxon>
        <taxon>Ruminantia</taxon>
        <taxon>Pecora</taxon>
        <taxon>Bovidae</taxon>
        <taxon>Bovinae</taxon>
        <taxon>Bos</taxon>
    </lineage>
</organism>
<dbReference type="EMBL" id="BC149893">
    <property type="protein sequence ID" value="AAI49894.1"/>
    <property type="molecule type" value="mRNA"/>
</dbReference>
<dbReference type="RefSeq" id="NP_001093820.1">
    <property type="nucleotide sequence ID" value="NM_001100350.1"/>
</dbReference>
<dbReference type="SMR" id="A6QQL9"/>
<dbReference type="FunCoup" id="A6QQL9">
    <property type="interactions" value="2893"/>
</dbReference>
<dbReference type="STRING" id="9913.ENSBTAP00000019085"/>
<dbReference type="PaxDb" id="9913-ENSBTAP00000019085"/>
<dbReference type="Ensembl" id="ENSBTAT00000019085.5">
    <property type="protein sequence ID" value="ENSBTAP00000019085.4"/>
    <property type="gene ID" value="ENSBTAG00000014353.6"/>
</dbReference>
<dbReference type="GeneID" id="512792"/>
<dbReference type="KEGG" id="bta:512792"/>
<dbReference type="CTD" id="6727"/>
<dbReference type="VEuPathDB" id="HostDB:ENSBTAG00000014353"/>
<dbReference type="VGNC" id="VGNC:35284">
    <property type="gene designation" value="SRP14"/>
</dbReference>
<dbReference type="eggNOG" id="KOG1761">
    <property type="taxonomic scope" value="Eukaryota"/>
</dbReference>
<dbReference type="GeneTree" id="ENSGT00390000008496"/>
<dbReference type="HOGENOM" id="CLU_094309_2_1_1"/>
<dbReference type="InParanoid" id="A6QQL9"/>
<dbReference type="OMA" id="RFNGHNK"/>
<dbReference type="OrthoDB" id="19209at2759"/>
<dbReference type="TreeFam" id="TF106247"/>
<dbReference type="Reactome" id="R-BTA-1799339">
    <property type="pathway name" value="SRP-dependent cotranslational protein targeting to membrane"/>
</dbReference>
<dbReference type="Reactome" id="R-BTA-6798695">
    <property type="pathway name" value="Neutrophil degranulation"/>
</dbReference>
<dbReference type="Proteomes" id="UP000009136">
    <property type="component" value="Chromosome 10"/>
</dbReference>
<dbReference type="Bgee" id="ENSBTAG00000014353">
    <property type="expression patterns" value="Expressed in oocyte and 106 other cell types or tissues"/>
</dbReference>
<dbReference type="GO" id="GO:0005786">
    <property type="term" value="C:signal recognition particle, endoplasmic reticulum targeting"/>
    <property type="evidence" value="ECO:0000318"/>
    <property type="project" value="GO_Central"/>
</dbReference>
<dbReference type="GO" id="GO:0008312">
    <property type="term" value="F:7S RNA binding"/>
    <property type="evidence" value="ECO:0007669"/>
    <property type="project" value="InterPro"/>
</dbReference>
<dbReference type="GO" id="GO:0030942">
    <property type="term" value="F:endoplasmic reticulum signal peptide binding"/>
    <property type="evidence" value="ECO:0007669"/>
    <property type="project" value="InterPro"/>
</dbReference>
<dbReference type="GO" id="GO:0045047">
    <property type="term" value="P:protein targeting to ER"/>
    <property type="evidence" value="ECO:0000318"/>
    <property type="project" value="GO_Central"/>
</dbReference>
<dbReference type="GO" id="GO:0006614">
    <property type="term" value="P:SRP-dependent cotranslational protein targeting to membrane"/>
    <property type="evidence" value="ECO:0007669"/>
    <property type="project" value="InterPro"/>
</dbReference>
<dbReference type="FunFam" id="3.30.720.10:FF:000002">
    <property type="entry name" value="signal recognition particle 14 kDa protein-like"/>
    <property type="match status" value="1"/>
</dbReference>
<dbReference type="Gene3D" id="3.30.720.10">
    <property type="entry name" value="Signal recognition particle alu RNA binding heterodimer, srp9/1"/>
    <property type="match status" value="1"/>
</dbReference>
<dbReference type="InterPro" id="IPR003210">
    <property type="entry name" value="Signal_recog_particle_SRP14"/>
</dbReference>
<dbReference type="InterPro" id="IPR009018">
    <property type="entry name" value="Signal_recog_particle_SRP9/14"/>
</dbReference>
<dbReference type="PANTHER" id="PTHR12013">
    <property type="entry name" value="SIGNAL RECOGNITION PARTICLE 14 KD PROTEIN"/>
    <property type="match status" value="1"/>
</dbReference>
<dbReference type="Pfam" id="PF02290">
    <property type="entry name" value="SRP14"/>
    <property type="match status" value="1"/>
</dbReference>
<dbReference type="SUPFAM" id="SSF54762">
    <property type="entry name" value="Signal recognition particle alu RNA binding heterodimer, SRP9/14"/>
    <property type="match status" value="1"/>
</dbReference>
<gene>
    <name type="primary">SRP14</name>
</gene>
<evidence type="ECO:0000250" key="1"/>
<evidence type="ECO:0000250" key="2">
    <source>
        <dbReference type="UniProtKB" id="P16254"/>
    </source>
</evidence>
<evidence type="ECO:0000250" key="3">
    <source>
        <dbReference type="UniProtKB" id="P16255"/>
    </source>
</evidence>
<evidence type="ECO:0000250" key="4">
    <source>
        <dbReference type="UniProtKB" id="P37108"/>
    </source>
</evidence>
<evidence type="ECO:0000256" key="5">
    <source>
        <dbReference type="SAM" id="MobiDB-lite"/>
    </source>
</evidence>
<evidence type="ECO:0000305" key="6"/>
<feature type="chain" id="PRO_0000322235" description="Signal recognition particle 14 kDa protein">
    <location>
        <begin position="1"/>
        <end position="110"/>
    </location>
</feature>
<feature type="region of interest" description="Disordered" evidence="5">
    <location>
        <begin position="90"/>
        <end position="110"/>
    </location>
</feature>
<feature type="compositionally biased region" description="Basic residues" evidence="5">
    <location>
        <begin position="96"/>
        <end position="110"/>
    </location>
</feature>
<feature type="modified residue" description="Phosphoserine" evidence="2">
    <location>
        <position position="45"/>
    </location>
</feature>
<reference key="1">
    <citation type="submission" date="2007-07" db="EMBL/GenBank/DDBJ databases">
        <authorList>
            <consortium name="NIH - Mammalian Gene Collection (MGC) project"/>
        </authorList>
    </citation>
    <scope>NUCLEOTIDE SEQUENCE [LARGE SCALE MRNA]</scope>
    <source>
        <strain>Hereford</strain>
        <tissue>Fetal pons</tissue>
    </source>
</reference>
<comment type="function">
    <text evidence="4">Component of the signal recognition particle (SRP) complex, a ribonucleoprotein complex that mediates the cotranslational targeting of secretory and membrane proteins to the endoplasmic reticulum (ER) (By similarity). SRP9 together with SRP14 and the Alu portion of the SRP RNA, constitutes the elongation arrest domain of SRP (By similarity). The complex of SRP9 and SRP14 is required for SRP RNA binding (By similarity).</text>
</comment>
<comment type="subunit">
    <text evidence="3 4">Heterodimer with SRP9; binds RNA as heterodimer (By similarity). Component of a signal recognition particle (SRP) complex that consists of a 7SL RNA molecule of 300 nucleotides and six protein subunits: SRP72, SRP68, SRP54, SRP19, SRP14 and SRP9 (By similarity).</text>
</comment>
<comment type="subcellular location">
    <subcellularLocation>
        <location evidence="1">Cytoplasm</location>
    </subcellularLocation>
</comment>
<comment type="similarity">
    <text evidence="6">Belongs to the SRP14 family.</text>
</comment>
<proteinExistence type="inferred from homology"/>
<keyword id="KW-0963">Cytoplasm</keyword>
<keyword id="KW-0597">Phosphoprotein</keyword>
<keyword id="KW-1185">Reference proteome</keyword>
<keyword id="KW-0687">Ribonucleoprotein</keyword>
<keyword id="KW-0694">RNA-binding</keyword>
<keyword id="KW-0733">Signal recognition particle</keyword>
<protein>
    <recommendedName>
        <fullName>Signal recognition particle 14 kDa protein</fullName>
        <shortName>SRP14</shortName>
    </recommendedName>
</protein>
<accession>A6QQL9</accession>
<name>SRP14_BOVIN</name>
<sequence length="110" mass="12461">MVLLESEQFLTELTRLFQKCRLSGSVFITLKKYDGRTKPIPRKGSVEGFEPSDNKCLLRATDGKKKISTVVSSKEVNKFQMAYSNLLRANMDGLKKRDKKSKSKKSKAAQ</sequence>